<evidence type="ECO:0000250" key="1"/>
<evidence type="ECO:0000269" key="2">
    <source>
    </source>
</evidence>
<evidence type="ECO:0000305" key="3"/>
<keyword id="KW-0349">Heme</keyword>
<keyword id="KW-0408">Iron</keyword>
<keyword id="KW-0479">Metal-binding</keyword>
<keyword id="KW-0503">Monooxygenase</keyword>
<keyword id="KW-0560">Oxidoreductase</keyword>
<name>C7D47_PANGI</name>
<reference key="1">
    <citation type="journal article" date="2011" name="Plant Cell Physiol.">
        <title>The Cyt P450 enzyme CYP716A47 catalyzes the formation of protopanaxadiol from dammarenediol-II during ginsenoside biosynthesis in Panax ginseng.</title>
        <authorList>
            <person name="Han J.Y."/>
            <person name="Kim H.J."/>
            <person name="Kwon Y.S."/>
            <person name="Choi Y.E."/>
        </authorList>
    </citation>
    <scope>NUCLEOTIDE SEQUENCE [MRNA]</scope>
    <scope>INDUCTION</scope>
</reference>
<comment type="function">
    <text evidence="1">Probable heme-thiolate monooxygenase.</text>
</comment>
<comment type="cofactor">
    <cofactor evidence="1">
        <name>heme</name>
        <dbReference type="ChEBI" id="CHEBI:30413"/>
    </cofactor>
</comment>
<comment type="induction">
    <text evidence="2">Down-regulated by methyl jasmonate (MeJA).</text>
</comment>
<comment type="similarity">
    <text evidence="3">Belongs to the cytochrome P450 family.</text>
</comment>
<organism>
    <name type="scientific">Panax ginseng</name>
    <name type="common">Korean ginseng</name>
    <dbReference type="NCBI Taxonomy" id="4054"/>
    <lineage>
        <taxon>Eukaryota</taxon>
        <taxon>Viridiplantae</taxon>
        <taxon>Streptophyta</taxon>
        <taxon>Embryophyta</taxon>
        <taxon>Tracheophyta</taxon>
        <taxon>Spermatophyta</taxon>
        <taxon>Magnoliopsida</taxon>
        <taxon>eudicotyledons</taxon>
        <taxon>Gunneridae</taxon>
        <taxon>Pentapetalae</taxon>
        <taxon>asterids</taxon>
        <taxon>campanulids</taxon>
        <taxon>Apiales</taxon>
        <taxon>Araliaceae</taxon>
        <taxon>Panax</taxon>
    </lineage>
</organism>
<protein>
    <recommendedName>
        <fullName>Cytochrome P450 CYP82D47</fullName>
        <ecNumber>1.14.-.-</ecNumber>
    </recommendedName>
</protein>
<proteinExistence type="evidence at transcript level"/>
<feature type="chain" id="PRO_0000425878" description="Cytochrome P450 CYP82D47">
    <location>
        <begin position="1"/>
        <end position="363"/>
    </location>
</feature>
<feature type="binding site" description="axial binding residue" evidence="1">
    <location>
        <position position="342"/>
    </location>
    <ligand>
        <name>heme</name>
        <dbReference type="ChEBI" id="CHEBI:30413"/>
    </ligand>
    <ligandPart>
        <name>Fe</name>
        <dbReference type="ChEBI" id="CHEBI:18248"/>
    </ligandPart>
</feature>
<dbReference type="EC" id="1.14.-.-"/>
<dbReference type="EMBL" id="JN604545">
    <property type="protein sequence ID" value="AEY75221.1"/>
    <property type="molecule type" value="mRNA"/>
</dbReference>
<dbReference type="SMR" id="H2DH24"/>
<dbReference type="GO" id="GO:0020037">
    <property type="term" value="F:heme binding"/>
    <property type="evidence" value="ECO:0007669"/>
    <property type="project" value="InterPro"/>
</dbReference>
<dbReference type="GO" id="GO:0005506">
    <property type="term" value="F:iron ion binding"/>
    <property type="evidence" value="ECO:0007669"/>
    <property type="project" value="InterPro"/>
</dbReference>
<dbReference type="GO" id="GO:0004497">
    <property type="term" value="F:monooxygenase activity"/>
    <property type="evidence" value="ECO:0007669"/>
    <property type="project" value="UniProtKB-KW"/>
</dbReference>
<dbReference type="GO" id="GO:0016705">
    <property type="term" value="F:oxidoreductase activity, acting on paired donors, with incorporation or reduction of molecular oxygen"/>
    <property type="evidence" value="ECO:0007669"/>
    <property type="project" value="InterPro"/>
</dbReference>
<dbReference type="FunFam" id="1.10.630.10:FF:000026">
    <property type="entry name" value="Cytochrome P450 82C4"/>
    <property type="match status" value="1"/>
</dbReference>
<dbReference type="Gene3D" id="1.10.630.10">
    <property type="entry name" value="Cytochrome P450"/>
    <property type="match status" value="1"/>
</dbReference>
<dbReference type="InterPro" id="IPR001128">
    <property type="entry name" value="Cyt_P450"/>
</dbReference>
<dbReference type="InterPro" id="IPR017972">
    <property type="entry name" value="Cyt_P450_CS"/>
</dbReference>
<dbReference type="InterPro" id="IPR002401">
    <property type="entry name" value="Cyt_P450_E_grp-I"/>
</dbReference>
<dbReference type="InterPro" id="IPR036396">
    <property type="entry name" value="Cyt_P450_sf"/>
</dbReference>
<dbReference type="InterPro" id="IPR050651">
    <property type="entry name" value="Plant_Cytochrome_P450_Monoox"/>
</dbReference>
<dbReference type="PANTHER" id="PTHR47947:SF39">
    <property type="entry name" value="CYTOCHROME P450"/>
    <property type="match status" value="1"/>
</dbReference>
<dbReference type="PANTHER" id="PTHR47947">
    <property type="entry name" value="CYTOCHROME P450 82C3-RELATED"/>
    <property type="match status" value="1"/>
</dbReference>
<dbReference type="Pfam" id="PF00067">
    <property type="entry name" value="p450"/>
    <property type="match status" value="1"/>
</dbReference>
<dbReference type="PRINTS" id="PR00463">
    <property type="entry name" value="EP450I"/>
</dbReference>
<dbReference type="PRINTS" id="PR00385">
    <property type="entry name" value="P450"/>
</dbReference>
<dbReference type="SUPFAM" id="SSF48264">
    <property type="entry name" value="Cytochrome P450"/>
    <property type="match status" value="1"/>
</dbReference>
<dbReference type="PROSITE" id="PS00086">
    <property type="entry name" value="CYTOCHROME_P450"/>
    <property type="match status" value="1"/>
</dbReference>
<sequence length="363" mass="41723">MFAFTPYSSFWVELRKITSLQLLSSRRLELLKHVRISEMEISMKQLYKIWSKKKDGSGRVLVEMKKLFGDLTLNVVLRMVAGKRYFGGGNANDDEEARRCRRVWREFFRLHGVFVVADSLPFLRWLDLGGYEKAMKKTAKEMDNIVSGWLEEHRMKRNSSDEDNTQQDFMDVMLSAVKNVDLCGFDADVVIKSTCMVLIASGTDTVGVELTWALSLLLNNRHALKKAQEELDNVVGKQRQVKESDLNNLVYLHAIIKETLRLYPAAQLGVRREFYEDCTVAGYHVPKGTLLAVNLWTLHRDPIIWSDPTEFRPERFLNMPKEVDVKGQHFELIPFGVGRRLCPGIAFGLQMLHLVLATLLHGF</sequence>
<accession>H2DH24</accession>